<proteinExistence type="evidence at protein level"/>
<organism>
    <name type="scientific">Escherichia coli (strain NC101)</name>
    <dbReference type="NCBI Taxonomy" id="753642"/>
    <lineage>
        <taxon>Bacteria</taxon>
        <taxon>Pseudomonadati</taxon>
        <taxon>Pseudomonadota</taxon>
        <taxon>Gammaproteobacteria</taxon>
        <taxon>Enterobacterales</taxon>
        <taxon>Enterobacteriaceae</taxon>
        <taxon>Escherichia</taxon>
    </lineage>
</organism>
<dbReference type="EC" id="3.1.-.-" evidence="5"/>
<dbReference type="EMBL" id="AEFA01000002">
    <property type="protein sequence ID" value="EFM55009.1"/>
    <property type="molecule type" value="Genomic_DNA"/>
</dbReference>
<dbReference type="RefSeq" id="WP_000554167.1">
    <property type="nucleotide sequence ID" value="NZ_AEFA01000002.1"/>
</dbReference>
<dbReference type="PDB" id="5I4Q">
    <property type="method" value="X-ray"/>
    <property type="resolution" value="2.35 A"/>
    <property type="chains" value="A=3197-3288"/>
</dbReference>
<dbReference type="PDB" id="5I4R">
    <property type="method" value="X-ray"/>
    <property type="resolution" value="3.30 A"/>
    <property type="chains" value="A/E=3197-3288"/>
</dbReference>
<dbReference type="PDBsum" id="5I4Q"/>
<dbReference type="PDBsum" id="5I4R"/>
<dbReference type="SMR" id="P0DSI1"/>
<dbReference type="GO" id="GO:0005576">
    <property type="term" value="C:extracellular region"/>
    <property type="evidence" value="ECO:0007669"/>
    <property type="project" value="UniProtKB-SubCell"/>
</dbReference>
<dbReference type="GO" id="GO:0004519">
    <property type="term" value="F:endonuclease activity"/>
    <property type="evidence" value="ECO:0007669"/>
    <property type="project" value="UniProtKB-KW"/>
</dbReference>
<dbReference type="GO" id="GO:0090729">
    <property type="term" value="F:toxin activity"/>
    <property type="evidence" value="ECO:0007669"/>
    <property type="project" value="UniProtKB-KW"/>
</dbReference>
<dbReference type="FunFam" id="2.160.20.10:FF:000048">
    <property type="entry name" value="tRNA nuclease CdiA"/>
    <property type="match status" value="1"/>
</dbReference>
<dbReference type="Gene3D" id="2.160.20.10">
    <property type="entry name" value="Single-stranded right-handed beta-helix, Pectin lyase-like"/>
    <property type="match status" value="1"/>
</dbReference>
<dbReference type="InterPro" id="IPR010069">
    <property type="entry name" value="CdiA_FHA1_rpt"/>
</dbReference>
<dbReference type="InterPro" id="IPR049271">
    <property type="entry name" value="DUF6862"/>
</dbReference>
<dbReference type="InterPro" id="IPR008638">
    <property type="entry name" value="FhaB/CdiA-like_TPS"/>
</dbReference>
<dbReference type="InterPro" id="IPR025157">
    <property type="entry name" value="Hemagglutinin_rpt"/>
</dbReference>
<dbReference type="InterPro" id="IPR006626">
    <property type="entry name" value="PbH1"/>
</dbReference>
<dbReference type="InterPro" id="IPR012334">
    <property type="entry name" value="Pectin_lyas_fold"/>
</dbReference>
<dbReference type="InterPro" id="IPR011050">
    <property type="entry name" value="Pectin_lyase_fold/virulence"/>
</dbReference>
<dbReference type="InterPro" id="IPR006914">
    <property type="entry name" value="VENN_dom"/>
</dbReference>
<dbReference type="NCBIfam" id="TIGR01901">
    <property type="entry name" value="adhes_NPXG"/>
    <property type="match status" value="1"/>
</dbReference>
<dbReference type="NCBIfam" id="TIGR01731">
    <property type="entry name" value="fil_hemag_20aa"/>
    <property type="match status" value="22"/>
</dbReference>
<dbReference type="Pfam" id="PF21726">
    <property type="entry name" value="DUF6862"/>
    <property type="match status" value="1"/>
</dbReference>
<dbReference type="Pfam" id="PF13332">
    <property type="entry name" value="Fil_haemagg_2"/>
    <property type="match status" value="4"/>
</dbReference>
<dbReference type="Pfam" id="PF04829">
    <property type="entry name" value="PT-VENN"/>
    <property type="match status" value="1"/>
</dbReference>
<dbReference type="Pfam" id="PF05860">
    <property type="entry name" value="TPS"/>
    <property type="match status" value="1"/>
</dbReference>
<dbReference type="SMART" id="SM00912">
    <property type="entry name" value="Haemagg_act"/>
    <property type="match status" value="1"/>
</dbReference>
<dbReference type="SMART" id="SM00710">
    <property type="entry name" value="PbH1"/>
    <property type="match status" value="7"/>
</dbReference>
<dbReference type="SUPFAM" id="SSF51126">
    <property type="entry name" value="Pectin lyase-like"/>
    <property type="match status" value="1"/>
</dbReference>
<feature type="signal peptide" evidence="8">
    <location>
        <begin position="1"/>
        <end position="32"/>
    </location>
</feature>
<feature type="chain" id="PRO_0000447223" description="tRNA nuclease CdiA">
    <location>
        <begin position="33"/>
        <end position="3289"/>
    </location>
</feature>
<feature type="region of interest" description="Two-partner system transport domain (TPS)" evidence="1">
    <location>
        <begin position="36"/>
        <end position="322"/>
    </location>
</feature>
<feature type="region of interest" description="FHA-1" evidence="1">
    <location>
        <begin position="351"/>
        <end position="1398"/>
    </location>
</feature>
<feature type="region of interest" description="Disordered" evidence="2">
    <location>
        <begin position="595"/>
        <end position="615"/>
    </location>
</feature>
<feature type="region of interest" description="Receptor binding domain (RBD)" evidence="1">
    <location>
        <begin position="1399"/>
        <end position="1689"/>
    </location>
</feature>
<feature type="region of interest" description="YP domain" evidence="1">
    <location>
        <begin position="1690"/>
        <end position="1874"/>
    </location>
</feature>
<feature type="region of interest" description="Periplasmic FHA-1 repeat (pFR)" evidence="1">
    <location>
        <begin position="1875"/>
        <end position="1935"/>
    </location>
</feature>
<feature type="region of interest" description="FHA-2" evidence="1">
    <location>
        <begin position="1979"/>
        <end position="2653"/>
    </location>
</feature>
<feature type="region of interest" description="Disordered" evidence="2">
    <location>
        <begin position="2097"/>
        <end position="2116"/>
    </location>
</feature>
<feature type="region of interest" description="Disordered" evidence="2">
    <location>
        <begin position="2332"/>
        <end position="2356"/>
    </location>
</feature>
<feature type="region of interest" description="Disordered" evidence="2">
    <location>
        <begin position="2466"/>
        <end position="2513"/>
    </location>
</feature>
<feature type="region of interest" description="Pretoxin (PT) domain" evidence="1">
    <location>
        <begin position="2992"/>
        <end position="3034"/>
    </location>
</feature>
<feature type="region of interest" description="C-terminal effector domain (CT); has tRNase activity" evidence="5">
    <location>
        <begin position="3035"/>
        <end position="3289"/>
    </location>
</feature>
<feature type="region of interest" description="Inner membrane translocation domain (IMTD), targets protein to PtsG" evidence="9">
    <location>
        <begin position="3039"/>
        <end position="3197"/>
    </location>
</feature>
<feature type="short sequence motif" description="VENN CT cleavage motif" evidence="8">
    <location>
        <begin position="3035"/>
        <end position="3038"/>
    </location>
</feature>
<feature type="compositionally biased region" description="Basic and acidic residues" evidence="2">
    <location>
        <begin position="2097"/>
        <end position="2113"/>
    </location>
</feature>
<feature type="compositionally biased region" description="Polar residues" evidence="2">
    <location>
        <begin position="2344"/>
        <end position="2356"/>
    </location>
</feature>
<feature type="compositionally biased region" description="Polar residues" evidence="2">
    <location>
        <begin position="2472"/>
        <end position="2507"/>
    </location>
</feature>
<feature type="mutagenesis site" description="No cleavage of tRNA in vivo or in vitro, has no CDI activity in vivo. No longer interacts with EF-Tu." evidence="5">
    <original>Y</original>
    <variation>A</variation>
    <location>
        <position position="3226"/>
    </location>
</feature>
<feature type="mutagenesis site" description="Full cleavage of tRNA in vivo, has wild-type CDI activity in vivo." evidence="5">
    <original>Q</original>
    <variation>A</variation>
    <location>
        <position position="3232"/>
    </location>
</feature>
<feature type="mutagenesis site" description="No cleavage of tRNA in vivo, has no CDI activity in vivo." evidence="5">
    <original>R</original>
    <variation>A</variation>
    <location>
        <position position="3234"/>
    </location>
</feature>
<feature type="mutagenesis site" description="Nearly complete cleavage of tRNA in vivo, attenuated CDI activity in vivo." evidence="5">
    <original>E</original>
    <variation>A</variation>
    <location>
        <position position="3270"/>
    </location>
</feature>
<feature type="mutagenesis site" description="No cleavage of tRNA in vivo or in vitro, has no CDI activity in vivo." evidence="5">
    <original>H</original>
    <variation>A</variation>
    <location>
        <position position="3282"/>
    </location>
</feature>
<feature type="mutagenesis site" description="Full cleavage of tRNA in vivo, has wild-type CDI activity in vivo." evidence="5">
    <original>Q</original>
    <variation>A</variation>
    <location>
        <position position="3284"/>
    </location>
</feature>
<feature type="strand" evidence="12">
    <location>
        <begin position="3211"/>
        <end position="3216"/>
    </location>
</feature>
<feature type="strand" evidence="12">
    <location>
        <begin position="3219"/>
        <end position="3222"/>
    </location>
</feature>
<feature type="helix" evidence="12">
    <location>
        <begin position="3223"/>
        <end position="3231"/>
    </location>
</feature>
<feature type="helix" evidence="12">
    <location>
        <begin position="3237"/>
        <end position="3245"/>
    </location>
</feature>
<feature type="strand" evidence="12">
    <location>
        <begin position="3250"/>
        <end position="3253"/>
    </location>
</feature>
<feature type="strand" evidence="12">
    <location>
        <begin position="3262"/>
        <end position="3266"/>
    </location>
</feature>
<feature type="strand" evidence="12">
    <location>
        <begin position="3269"/>
        <end position="3274"/>
    </location>
</feature>
<feature type="turn" evidence="12">
    <location>
        <begin position="3275"/>
        <end position="3278"/>
    </location>
</feature>
<feature type="strand" evidence="12">
    <location>
        <begin position="3279"/>
        <end position="3285"/>
    </location>
</feature>
<accession>P0DSI1</accession>
<reference key="1">
    <citation type="submission" date="2010-04" db="EMBL/GenBank/DDBJ databases">
        <authorList>
            <person name="Suzuki H."/>
            <person name="Richards V."/>
            <person name="Lefebure T."/>
            <person name="Pavinski Bitar P."/>
            <person name="Lang P."/>
            <person name="Stanhope M."/>
        </authorList>
    </citation>
    <scope>NUCLEOTIDE SEQUENCE [LARGE SCALE GENOMIC DNA]</scope>
    <source>
        <strain>NC101</strain>
    </source>
</reference>
<reference key="2">
    <citation type="journal article" date="2015" name="Proc. Natl. Acad. Sci. U.S.A.">
        <title>Contact-dependent growth inhibition toxins exploit multiple independent cell-entry pathways.</title>
        <authorList>
            <person name="Willett J.L."/>
            <person name="Gucinski G.C."/>
            <person name="Fatherree J.P."/>
            <person name="Low D.A."/>
            <person name="Hayes C.S."/>
        </authorList>
    </citation>
    <scope>FUNCTION</scope>
    <scope>RECEPTOR FOR ENTRY INTO TARGET CELL CYTOPLASM</scope>
    <scope>DOMAIN</scope>
    <source>
        <strain>NC101</strain>
    </source>
</reference>
<reference key="3">
    <citation type="journal article" date="2017" name="Proc. Natl. Acad. Sci. U.S.A.">
        <title>Activation of contact-dependent antibacterial tRNase toxins by translation elongation factors.</title>
        <authorList>
            <person name="Jones A.M."/>
            <person name="Garza-Sanchez F."/>
            <person name="So J."/>
            <person name="Hayes C.S."/>
            <person name="Low D.A."/>
        </authorList>
    </citation>
    <scope>FUNCTION</scope>
    <scope>SUBCELLULAR LOCATION</scope>
    <source>
        <strain>NC101</strain>
    </source>
</reference>
<reference evidence="10 11" key="4">
    <citation type="journal article" date="2017" name="Nucleic Acids Res.">
        <title>Structure of a novel antibacterial toxin that exploits elongation factor Tu to cleave specific transfer RNAs.</title>
        <authorList>
            <person name="Michalska K."/>
            <person name="Gucinski G.C."/>
            <person name="Garza-Sanchez F."/>
            <person name="Johnson P.M."/>
            <person name="Stols L.M."/>
            <person name="Eschenfeldt W.H."/>
            <person name="Babnigg G."/>
            <person name="Low D.A."/>
            <person name="Goulding C.W."/>
            <person name="Joachimiak A."/>
            <person name="Hayes C.S."/>
        </authorList>
    </citation>
    <scope>X-RAY CRYSTALLOGRAPHY (3.30 ANGSTROMS) OF 3197-3288 IN COMPLEX WITH GDP; EF-TU AND CDII-NC101</scope>
    <scope>FUNCTION</scope>
    <scope>SUBUNIT</scope>
    <scope>DOMAIN</scope>
    <scope>MUTAGENESIS OF TYR-3226; GLN-3232; ARG-3234; GLU-3270; HIS-3282 AND GLN-3284</scope>
    <source>
        <strain>NC101</strain>
    </source>
</reference>
<protein>
    <recommendedName>
        <fullName evidence="7">tRNA nuclease CdiA</fullName>
        <shortName>tRNase CdiA</shortName>
        <ecNumber evidence="5">3.1.-.-</ecNumber>
    </recommendedName>
    <alternativeName>
        <fullName evidence="6">CdiA-NC101</fullName>
    </alternativeName>
    <alternativeName>
        <fullName>Toxin CdiA</fullName>
    </alternativeName>
</protein>
<keyword id="KW-0002">3D-structure</keyword>
<keyword id="KW-0255">Endonuclease</keyword>
<keyword id="KW-0378">Hydrolase</keyword>
<keyword id="KW-0540">Nuclease</keyword>
<keyword id="KW-0964">Secreted</keyword>
<keyword id="KW-0732">Signal</keyword>
<keyword id="KW-1266">Target cell cytoplasm</keyword>
<keyword id="KW-0800">Toxin</keyword>
<keyword id="KW-0843">Virulence</keyword>
<gene>
    <name evidence="7" type="primary">cdiA</name>
    <name type="ORF">ECNC101_09164</name>
</gene>
<sequence>MHQPPVRFTYRLLSYLISTIIAGQPLLPAVGAVITPQNGAGMDKAANGVPVVNIATPDGAGISHNRFTDYNVGKEGLILNNATGKLNPTQLGGLIQNNPNLKAGGEAKGIINEVTGGNRSLLQGYTEVAGKAANVMVANPYGITCDGCGFINTPHATLTTGRPVMNADGSLQALEVTEGSITINGAGLDGTRSDAVSIIARATEVNAALHAKDLTVTAGANRITADGRVSALKGEGDVPKVAVDTGALGGMYARRIHLTSTESGVGVNLGNLYARDGDITLDASGRLTVNNSLATGAVTAKGQGVTLTGDHKAGGNLSVSSRSDIVLSNGTLNSDKDLSLTAGGRITQQNEKLTAGRDVTLAAKNITQDTASQINAARDIVTVSSDTLTTQGQITAGQNLTASATTLTQDGTLLAKGHAGLDAGTLNNSGAVQGASLTLGSTTLSNSGSLLSGGPLTVNTRDFTQSGRTGAKGKVDITASGKLTSTGSLVSDDVLVLKAQDVTQNGVLSGGKGLTVSAQALSSGKKSVTHSDAAMTLNVTTVALDGENSAGDTLRVQADKLSTAAGAQLQSGKNLSINARDARLAGTQAAQQTMAVNASEKLTHSGKSSAPSLSLSAPELTSSGVLVGSALNTQSQTLTNSGLLQGEASLTVNTQRLDNQQNGTLYSAADLTLDIPDIRNSGLITGDNGLTLNTASLSNPGKIIADTLNVRATTLDGDGLLQGAGALALAGDTLSQGRNGRWLTAGDLSLRGKTLHTAGTTQGQNLTVQADNWANSGSVLATGNLTASATGQLTSTGDIMSQGDTTLNAATTDNRGSLLSAGTLSLDGNSLDNRGTVQGNHVTIRQNSVTNSGTLTGIAALTLAARMDMASPQPALMNNGGSLLTSGDLTITAGSITSSGHWQGKQVLITADSLANSGAIQAADSLTARLTGELVSTAGSKVTSNGEMALSALNLSNSGQWIAKNLTLKANSLTSAGDITGVDALTLTVNQTLNNHASGKLLSAGVLTLKADSVKNDGQLQGNATTITAGQLTNGGHLQGETLTLTASGGVNNRSGGVLMSRNALNVSTATLSNQGTIQGGGGVSLNATDRLQNDGKILSGSNLTLTAQVLANTGSGLVQAATLLLDVVNTVNGGRVLATGSADVKGTTLNNTGTLQGADLLVNYHTFSNSGTLLGTSGLGVKGSSLLQNGTGRLYSAGNLLLDAQDFSGQGQVVATGDVTLKLIAALTNHGTLAAGKTLSVTSQNAITNGGVMQGDAMVLGAGEAFTNNGMLTAGKGNSVFSAQRLFLNAPGSLQAGGDVSLNSRSDITISGFTGTAGSLTMNVAGTLLNSALIYAGNNLKLFTDRLHNQHGDILAGNSLWVQKDASGGANTEIINTSGNIETHQGDIVVRTGHLLNQREGFSATTTTRTNPSSIQGMGNALVDIPLSLLPDGSYGYFTREVENQHGTPCNGHGACNITMDTLYYYAPFADSATQRFLSSQNITTVTGADNPAGRIASGRNLSAEAERLENRASFILANGDIALSGRELSNQSWQTGTENEYLVYRYDPKTFYGSYATGSLDKLPLLSPEFENNTIRFSLDGREKDYTPGKTYYSVIQAGGDVKTRFTSSINNGTTTAHAGSVSPVVSAPVLNTLSQQTGGDSLTQTALQQYEPVVVGSPQWHDELAGALKNIAGGSPLTGQTGISDDWPLPSGNNGYLVPSTDPDSPYLITVNPKLDGLGQVDSHLFAGLYELLGAKPGQAPRETAPSYTDEKQFLGSSYFLDRLGLKPEKDYRFLGDAVFDTRYVSNAVLSRTGSRYLNGLGSDTEQMRYLMDNAARQQKGLGLEFGVALTAEQIAQLDGSILWWESATINGQTVMVPKLYLSPEDITLHNGSVISGNNVQLAGGNITNSGGSINAQNGLSLDSTGYIDNLNAGLISAGGSLDLSAIGDISNISSVISGKTVQLESVSGNISNITRRQQWNAGSDSRYGGVHLSGTDTGPVATIKGTDSLSLDAGKNIDITGATVSSGGTLGMSAGNDINIAANLISGSKSQSGFWHTDDNSASSTTSQGSSISAGGNLAMAAGHNLDVTASSVSAGHSALLSAGNDLSLNAVRESKNSRNGRSESHESHAAVSTVTAGDNLLLVAGRDVASQAAGVAAENNVVIRGGRDVNLVAESAGAGDSYTSKKKKEINETVRQQGTEIASGGDTTVNAGRDITAVASSVTATGNISVNAGRDVALTTATESDYHYLETKKKSGGFLSKKTTHTISEDSASREAGSLLSGNRVTVNAGDNLTVEGSDVVADQDVSLAAGNHVDVLAATSTDTSWRFKETKKSGLMGTGGIGFTIGSSKTTHDRREAGTTQSQSASTIGSTAGNVSITAGKQAHISGSDVIANRDISITGDSVVVDPGHDRRTVDEKFEQKKSGLTVALSGTVGSAINNAVTSAQETKESSDSRLKALQATKTALSGVQAGQAAAMATATGDPNATGVSLSLTTQKSKSQQHSESDTVSGSTLNAGNNLSVVATGKNRGDNRGDIVIAGSQLKAGGNTSLDAANDVLLSGAANTQKTTGRNSSSGGGVGVSIGAGGNGAGISVFASVNAAKGSEKGNGTEWTETTIDSGKTVTINSGRDTVLNGAQVNGNRIIADVGHDLLISSQQDTSKYDSKQTSVAAGGSFTFGSMTGSGYIAASRDKMKSRFDSVAEQTGMFSGDGGFDITVGNHTQLDGAVIASTATADKNSLDTGTLGFSDIHNEADYKVSHSGISLSGGGSFGDKFQGNMPGGMISAGGHSGHAEGTTQAAVADGTITIRDRDNQKQNLANLSRDPAHANDSISPIFDKEKEQRRLQTVGLISDIGSQVADIARTQGELNALKAAQDKYGPVPADATEEQRQAYLAKLRDTPEYKKEQEKYGTGSEIQRGIQAATAALQGLAGGNLAGALAGASAPELAHLLKSTEKDPAVNAIAHAILGGTVAAMQGNNVAAGAAGAATGELAARAIAGMLYPGVKQSDLSEEQKQTISTLATVSAGLAGGLTGNSTASAAVGAQSGKNAVENNYLSVSEKTELEIAKQTLKNSKDPAEREKAQQKYDALLEKDIASDKEVIAACSNGNASSSACASARLKVIASKEGYEDGPYNSKYSQQYADAYGQIVNLLDITSVDAQNQQQVKNAMINYFMVTKGVDRQTAESYTETTQGLEIIAASVTPLIGQAASNKLSYLGIGKKISFDGDFYTVDGMKFSKSYYEKLWEQGRPAPFVQAREVLNSNPKIEPDPRGAPGYLRYEGAGLEMIYNPKTGQVGHIQPVKVK</sequence>
<evidence type="ECO:0000250" key="1">
    <source>
        <dbReference type="UniProtKB" id="A0A1S4NYE3"/>
    </source>
</evidence>
<evidence type="ECO:0000256" key="2">
    <source>
        <dbReference type="SAM" id="MobiDB-lite"/>
    </source>
</evidence>
<evidence type="ECO:0000269" key="3">
    <source>
    </source>
</evidence>
<evidence type="ECO:0000269" key="4">
    <source>
    </source>
</evidence>
<evidence type="ECO:0000269" key="5">
    <source>
    </source>
</evidence>
<evidence type="ECO:0000303" key="6">
    <source>
    </source>
</evidence>
<evidence type="ECO:0000303" key="7">
    <source>
    </source>
</evidence>
<evidence type="ECO:0000305" key="8"/>
<evidence type="ECO:0000305" key="9">
    <source>
    </source>
</evidence>
<evidence type="ECO:0007744" key="10">
    <source>
        <dbReference type="PDB" id="5I4Q"/>
    </source>
</evidence>
<evidence type="ECO:0007744" key="11">
    <source>
        <dbReference type="PDB" id="5I4R"/>
    </source>
</evidence>
<evidence type="ECO:0007829" key="12">
    <source>
        <dbReference type="PDB" id="5I4Q"/>
    </source>
</evidence>
<name>CDIA_ECONC</name>
<comment type="function">
    <text evidence="3 4 5">Toxic component of a toxin-immunity protein module, which functions as a cellular contact-dependent growth inhibition (CDI) system. CDI modules allow bacteria to communicate with and inhibit the growth of closely related neighboring bacteria in a contact-dependent fashion (target cell counts decrease about 10,0000-fold for this system). CdiA toxicity is neutralized by its cognate immunity protein CdiI-NC101, but not by CdiI from other bacteria (PubMed:26305955, PubMed:28973472). The C-terminal domain (CT) cleaves tRNA endonucleolytically at the 5' side of guanine discriminator nucleotide sites (removes the last 4 nucleotides of the tRNA acceptor arm when the first nucleotide to be removed is G) (PubMed:28973472). Requires EF-Ts (tsf) for toxic function of the CT domain in vivo (PubMed:28223500). In vitro the CT tRNase activity requires both EF-Tu (tufA) and EF-Ts. EF-Ts probably increases steady-state GTP-EF-Tu-aa-tRNA substrate levels. The CT domain is thought to remodel this same complex to displace the 3'-end of the aa-tRNA and allow it to enter into the toxin active site (PubMed:28973472). The CT domain gains access to the cytoplasm of target cells by using integral inner membrane protein PTS system glucose-specific EIICB component (ptsG) (PubMed:26305955).</text>
</comment>
<comment type="function">
    <text evidence="9">The CdiA protein is thought to be exported from the cell through the central lumen of CdiB, the other half of its two-partner system (TPS). The TPS domain probably remains associated with CdiB while the FHA-1 domain forms an extended filament with the receptor-binding domain (RBD) at its extremity; in the secretion arrested state the C-terminus of the RBD and YP domains form a hairpin-like structure as the FHA-2, PT and CT domains are periplasmic. The YP domain is probably responsible for this arrest at the point where it re-enters the host cell periplasm. Upon binding to a target cell outer membrane receptor a signal is transmitted to activate secretion. The filament elongates slightly, the rest of CdiA is secreted and the FHA-2 domain becomes stably associated with the target cell's outer membrane where it facilitates entry of the toxic CT domain into the target cell periplasm. From there the toxic CT domain is cleaved and gains access to the target cell cytoplasm via an inner membrane protein (PtsG for this CDI).</text>
</comment>
<comment type="subunit">
    <text evidence="5">Forms a contact-dependent growth inhibition complex of CdiA-CT-NC101, CdiI-NC101 and EF-Tu; the complex is a dimer of heterotrimers. Stable CdiA-CT-NC101, EF-Tu complexes are not detected, nor are complexes with EF-Ts.</text>
</comment>
<comment type="subcellular location">
    <subcellularLocation>
        <location evidence="8">Secreted</location>
    </subcellularLocation>
    <subcellularLocation>
        <location evidence="5">Target cell</location>
        <location evidence="5">Target cell cytoplasm</location>
    </subcellularLocation>
    <text evidence="8">Secreted to the cell surface by CdiB, its two partner secretion pathway (TPS) partner.</text>
</comment>
<comment type="domain">
    <text evidence="5">The C-terminal domain (CT) has toxic tRNase activity.</text>
</comment>
<comment type="similarity">
    <text evidence="8">In the N-terminal section; belongs to the CdiA toxin family.</text>
</comment>